<gene>
    <name evidence="1" type="primary">tsaD</name>
    <name type="synonym">gcp</name>
    <name type="ordered locus">PPA1782</name>
</gene>
<keyword id="KW-0012">Acyltransferase</keyword>
<keyword id="KW-0963">Cytoplasm</keyword>
<keyword id="KW-0408">Iron</keyword>
<keyword id="KW-0479">Metal-binding</keyword>
<keyword id="KW-0808">Transferase</keyword>
<keyword id="KW-0819">tRNA processing</keyword>
<protein>
    <recommendedName>
        <fullName evidence="1">tRNA N6-adenosine threonylcarbamoyltransferase</fullName>
        <ecNumber evidence="1">2.3.1.234</ecNumber>
    </recommendedName>
    <alternativeName>
        <fullName evidence="1">N6-L-threonylcarbamoyladenine synthase</fullName>
        <shortName evidence="1">t(6)A synthase</shortName>
    </alternativeName>
    <alternativeName>
        <fullName evidence="1">t(6)A37 threonylcarbamoyladenosine biosynthesis protein TsaD</fullName>
    </alternativeName>
    <alternativeName>
        <fullName evidence="1">tRNA threonylcarbamoyladenosine biosynthesis protein TsaD</fullName>
    </alternativeName>
</protein>
<sequence length="347" mass="35996">MSEPLILGIESSCDETGVGIVRGNDLLANEVASSMEQHVRFGGVVPEVASRAHLEAIVPVLDKAASTAGVDLSELDGIAVTAGPGLAGALVVGLSAAKALASWLNKPLYGVNHLAGHVAVDLLEHGELPMPCGALLVSGGHTSLLWVNDIATDIIEVGSTIDDAAGEAYDKVARVLGLPYPGGPVIDKAAAEGDPTAIRFPRGLTARHDMVKHRFDYSFSGLKTAVSRWVETQQRDGVEFRIADVAASFQEAVADVLTAKAVDMCQEYGLTHFLIGGGVAANSRLRTLLAERMADAGVELRRPRPGLCTDNGAMIAALGVQVVKAGLPASAMDISADSGLPIETVLV</sequence>
<accession>Q6A6V2</accession>
<proteinExistence type="inferred from homology"/>
<dbReference type="EC" id="2.3.1.234" evidence="1"/>
<dbReference type="EMBL" id="AE017283">
    <property type="protein sequence ID" value="AAT83511.1"/>
    <property type="molecule type" value="Genomic_DNA"/>
</dbReference>
<dbReference type="RefSeq" id="WP_002522092.1">
    <property type="nucleotide sequence ID" value="NZ_CP025935.1"/>
</dbReference>
<dbReference type="SMR" id="Q6A6V2"/>
<dbReference type="EnsemblBacteria" id="AAT83511">
    <property type="protein sequence ID" value="AAT83511"/>
    <property type="gene ID" value="PPA1782"/>
</dbReference>
<dbReference type="KEGG" id="pac:PPA1782"/>
<dbReference type="eggNOG" id="COG0533">
    <property type="taxonomic scope" value="Bacteria"/>
</dbReference>
<dbReference type="HOGENOM" id="CLU_023208_0_2_11"/>
<dbReference type="Proteomes" id="UP000000603">
    <property type="component" value="Chromosome"/>
</dbReference>
<dbReference type="GO" id="GO:0005737">
    <property type="term" value="C:cytoplasm"/>
    <property type="evidence" value="ECO:0007669"/>
    <property type="project" value="UniProtKB-SubCell"/>
</dbReference>
<dbReference type="GO" id="GO:0005506">
    <property type="term" value="F:iron ion binding"/>
    <property type="evidence" value="ECO:0007669"/>
    <property type="project" value="UniProtKB-UniRule"/>
</dbReference>
<dbReference type="GO" id="GO:0061711">
    <property type="term" value="F:N(6)-L-threonylcarbamoyladenine synthase activity"/>
    <property type="evidence" value="ECO:0007669"/>
    <property type="project" value="UniProtKB-EC"/>
</dbReference>
<dbReference type="GO" id="GO:0002949">
    <property type="term" value="P:tRNA threonylcarbamoyladenosine modification"/>
    <property type="evidence" value="ECO:0007669"/>
    <property type="project" value="UniProtKB-UniRule"/>
</dbReference>
<dbReference type="CDD" id="cd24133">
    <property type="entry name" value="ASKHA_NBD_TsaD_bac"/>
    <property type="match status" value="1"/>
</dbReference>
<dbReference type="FunFam" id="3.30.420.40:FF:000012">
    <property type="entry name" value="tRNA N6-adenosine threonylcarbamoyltransferase"/>
    <property type="match status" value="1"/>
</dbReference>
<dbReference type="FunFam" id="3.30.420.40:FF:000040">
    <property type="entry name" value="tRNA N6-adenosine threonylcarbamoyltransferase"/>
    <property type="match status" value="1"/>
</dbReference>
<dbReference type="Gene3D" id="3.30.420.40">
    <property type="match status" value="2"/>
</dbReference>
<dbReference type="HAMAP" id="MF_01445">
    <property type="entry name" value="TsaD"/>
    <property type="match status" value="1"/>
</dbReference>
<dbReference type="InterPro" id="IPR043129">
    <property type="entry name" value="ATPase_NBD"/>
</dbReference>
<dbReference type="InterPro" id="IPR000905">
    <property type="entry name" value="Gcp-like_dom"/>
</dbReference>
<dbReference type="InterPro" id="IPR017861">
    <property type="entry name" value="KAE1/TsaD"/>
</dbReference>
<dbReference type="InterPro" id="IPR017860">
    <property type="entry name" value="Peptidase_M22_CS"/>
</dbReference>
<dbReference type="InterPro" id="IPR022450">
    <property type="entry name" value="TsaD"/>
</dbReference>
<dbReference type="NCBIfam" id="TIGR00329">
    <property type="entry name" value="gcp_kae1"/>
    <property type="match status" value="1"/>
</dbReference>
<dbReference type="NCBIfam" id="TIGR03723">
    <property type="entry name" value="T6A_TsaD_YgjD"/>
    <property type="match status" value="1"/>
</dbReference>
<dbReference type="PANTHER" id="PTHR11735">
    <property type="entry name" value="TRNA N6-ADENOSINE THREONYLCARBAMOYLTRANSFERASE"/>
    <property type="match status" value="1"/>
</dbReference>
<dbReference type="PANTHER" id="PTHR11735:SF6">
    <property type="entry name" value="TRNA N6-ADENOSINE THREONYLCARBAMOYLTRANSFERASE, MITOCHONDRIAL"/>
    <property type="match status" value="1"/>
</dbReference>
<dbReference type="Pfam" id="PF00814">
    <property type="entry name" value="TsaD"/>
    <property type="match status" value="1"/>
</dbReference>
<dbReference type="PRINTS" id="PR00789">
    <property type="entry name" value="OSIALOPTASE"/>
</dbReference>
<dbReference type="SUPFAM" id="SSF53067">
    <property type="entry name" value="Actin-like ATPase domain"/>
    <property type="match status" value="1"/>
</dbReference>
<dbReference type="PROSITE" id="PS01016">
    <property type="entry name" value="GLYCOPROTEASE"/>
    <property type="match status" value="1"/>
</dbReference>
<feature type="chain" id="PRO_0000303487" description="tRNA N6-adenosine threonylcarbamoyltransferase">
    <location>
        <begin position="1"/>
        <end position="347"/>
    </location>
</feature>
<feature type="binding site" evidence="1">
    <location>
        <position position="113"/>
    </location>
    <ligand>
        <name>Fe cation</name>
        <dbReference type="ChEBI" id="CHEBI:24875"/>
    </ligand>
</feature>
<feature type="binding site" evidence="1">
    <location>
        <position position="117"/>
    </location>
    <ligand>
        <name>Fe cation</name>
        <dbReference type="ChEBI" id="CHEBI:24875"/>
    </ligand>
</feature>
<feature type="binding site" evidence="1">
    <location>
        <begin position="136"/>
        <end position="140"/>
    </location>
    <ligand>
        <name>substrate</name>
    </ligand>
</feature>
<feature type="binding site" evidence="1">
    <location>
        <position position="170"/>
    </location>
    <ligand>
        <name>substrate</name>
    </ligand>
</feature>
<feature type="binding site" evidence="1">
    <location>
        <position position="183"/>
    </location>
    <ligand>
        <name>substrate</name>
    </ligand>
</feature>
<feature type="binding site" evidence="1">
    <location>
        <position position="187"/>
    </location>
    <ligand>
        <name>substrate</name>
    </ligand>
</feature>
<feature type="binding site" evidence="1">
    <location>
        <position position="282"/>
    </location>
    <ligand>
        <name>substrate</name>
    </ligand>
</feature>
<feature type="binding site" evidence="1">
    <location>
        <position position="310"/>
    </location>
    <ligand>
        <name>Fe cation</name>
        <dbReference type="ChEBI" id="CHEBI:24875"/>
    </ligand>
</feature>
<reference key="1">
    <citation type="journal article" date="2004" name="Science">
        <title>The complete genome sequence of Propionibacterium acnes, a commensal of human skin.</title>
        <authorList>
            <person name="Brueggemann H."/>
            <person name="Henne A."/>
            <person name="Hoster F."/>
            <person name="Liesegang H."/>
            <person name="Wiezer A."/>
            <person name="Strittmatter A."/>
            <person name="Hujer S."/>
            <person name="Duerre P."/>
            <person name="Gottschalk G."/>
        </authorList>
    </citation>
    <scope>NUCLEOTIDE SEQUENCE [LARGE SCALE GENOMIC DNA]</scope>
    <source>
        <strain>DSM 16379 / KPA171202</strain>
    </source>
</reference>
<evidence type="ECO:0000255" key="1">
    <source>
        <dbReference type="HAMAP-Rule" id="MF_01445"/>
    </source>
</evidence>
<name>TSAD_CUTAK</name>
<comment type="function">
    <text evidence="1">Required for the formation of a threonylcarbamoyl group on adenosine at position 37 (t(6)A37) in tRNAs that read codons beginning with adenine. Is involved in the transfer of the threonylcarbamoyl moiety of threonylcarbamoyl-AMP (TC-AMP) to the N6 group of A37, together with TsaE and TsaB. TsaD likely plays a direct catalytic role in this reaction.</text>
</comment>
<comment type="catalytic activity">
    <reaction evidence="1">
        <text>L-threonylcarbamoyladenylate + adenosine(37) in tRNA = N(6)-L-threonylcarbamoyladenosine(37) in tRNA + AMP + H(+)</text>
        <dbReference type="Rhea" id="RHEA:37059"/>
        <dbReference type="Rhea" id="RHEA-COMP:10162"/>
        <dbReference type="Rhea" id="RHEA-COMP:10163"/>
        <dbReference type="ChEBI" id="CHEBI:15378"/>
        <dbReference type="ChEBI" id="CHEBI:73682"/>
        <dbReference type="ChEBI" id="CHEBI:74411"/>
        <dbReference type="ChEBI" id="CHEBI:74418"/>
        <dbReference type="ChEBI" id="CHEBI:456215"/>
        <dbReference type="EC" id="2.3.1.234"/>
    </reaction>
</comment>
<comment type="cofactor">
    <cofactor evidence="1">
        <name>Fe(2+)</name>
        <dbReference type="ChEBI" id="CHEBI:29033"/>
    </cofactor>
    <text evidence="1">Binds 1 Fe(2+) ion per subunit.</text>
</comment>
<comment type="subcellular location">
    <subcellularLocation>
        <location evidence="1">Cytoplasm</location>
    </subcellularLocation>
</comment>
<comment type="similarity">
    <text evidence="1">Belongs to the KAE1 / TsaD family.</text>
</comment>
<organism>
    <name type="scientific">Cutibacterium acnes (strain DSM 16379 / KPA171202)</name>
    <name type="common">Propionibacterium acnes</name>
    <dbReference type="NCBI Taxonomy" id="267747"/>
    <lineage>
        <taxon>Bacteria</taxon>
        <taxon>Bacillati</taxon>
        <taxon>Actinomycetota</taxon>
        <taxon>Actinomycetes</taxon>
        <taxon>Propionibacteriales</taxon>
        <taxon>Propionibacteriaceae</taxon>
        <taxon>Cutibacterium</taxon>
    </lineage>
</organism>